<protein>
    <recommendedName>
        <fullName evidence="4">Collagen alpha-2(I) chain</fullName>
    </recommendedName>
    <alternativeName>
        <fullName evidence="1">Alpha-2 type I collagen</fullName>
    </alternativeName>
</protein>
<sequence>SGGFDFSFLPQPPQEKAGVGLGPGPMGLMGPRGPPGASGAPGPQGFQGPAGEPGEPGQTGPAGARGPAGPPGKAGPGKPGRPGERGVVGPQGARGFPGTPGLPGFKGIRGGQTGARGLPGERGRVGAPGPAGARGSDGSVGPVGPAGPIGSAGPPGFPGAPGPKGELGPVGNTGPGPAGPRGEQGLPGVSGPVGPPGNPGANGLTGAKGAAGLPGVAGAPGLPGPRGIPGPVGASGATGARGLVGEPGPAGSKGESGGKGEPGSAGPQGPPGSSGEEGKRGPNGGSTGPTGPPGLRGGPGSRGLPGADGRAGVIGPAGARGASGPAGVRGPSGDTGRPGEPGLMGARGLPGSPGNVGPAGKEGPAGLPGIDGRPGPIGPAGARGEAGNIGFPGPKGPAGDPGKGAPGPDGNNGAQGPPGLQGVQGGKGTTGEAGKPGERGPGEFGLPGPAGPRGERGPPGESGAVGPSGAIGSRGPSGPPGPDGNKGEPGVVGAPGTAGPAGSGGPGERGAAGIPGGKGEKGETGLRGEVGTTGRDGARGAPGAVGAPGPAGATGDRGEAGAAGPAGPAGPRGSPGERGEVGPAGPNGFAGPAGAAGQPGAKGERGTKGPKGENGIVGPTGPVGSAGPAGPNGPAGPAGSRGDGGPPGVTGFPGAAGRTGPPGPSGITGPPGPPGAAGKEGLRGPRGDQGPVGRTGETGAGGPPGFTGEKGPSGEPGTAGPPGTAGPQGLLGAPGILGLPGSRGERGLPGVAGAVGEPGPLGIGPPGARGPSGAGKHGNRGEPGPVGSVGPVGALGPRGPSGPQGIRGDKGEPGEKGPRGLPGLGLPGLAGQHGDQGPGPVGPAGPRGPAGPSGPPGKDGRTGHPGAVGPAGIRGSQGSQGPSGPPGPPGPPGPPGASGGGYDFGYEGDFYRA</sequence>
<proteinExistence type="evidence at protein level"/>
<comment type="function">
    <text evidence="5">Type I collagen is a member of group I collagen (fibrillar forming collagen).</text>
</comment>
<comment type="subunit">
    <text evidence="1">Trimers of one alpha 2(I) and two alpha 1(I) chains. Interacts (via C-terminus) with TMEM131 (via PapD-L domain); the interaction is direct and is involved in assembly and TRAPPIII ER-to-Golgi transport complex-dependent secretion of collagen.</text>
</comment>
<comment type="subcellular location">
    <subcellularLocation>
        <location>Secreted</location>
    </subcellularLocation>
    <subcellularLocation>
        <location>Secreted</location>
        <location>Extracellular space</location>
    </subcellularLocation>
    <subcellularLocation>
        <location evidence="5">Secreted</location>
        <location evidence="5">Extracellular space</location>
        <location evidence="5">Extracellular matrix</location>
    </subcellularLocation>
</comment>
<comment type="tissue specificity">
    <text evidence="3">Expressed in bones.</text>
</comment>
<comment type="PTM">
    <text evidence="1">Prolines at the third position of the tripeptide repeating unit (G-X-Y) are hydroxylated in some or all of the chains.</text>
</comment>
<comment type="miscellaneous">
    <text evidence="3">These protein fragments were extracted from an ancient humerus epiphysis bone collected in Haiti.</text>
</comment>
<comment type="similarity">
    <text evidence="5">Belongs to the fibrillar collagen family.</text>
</comment>
<feature type="chain" id="PRO_0000448455" description="Collagen alpha-2(I) chain">
    <location>
        <begin position="1"/>
        <end position="913"/>
    </location>
</feature>
<feature type="region of interest" description="Disordered" evidence="2">
    <location>
        <begin position="1"/>
        <end position="913"/>
    </location>
</feature>
<feature type="compositionally biased region" description="Low complexity" evidence="2">
    <location>
        <begin position="28"/>
        <end position="67"/>
    </location>
</feature>
<feature type="compositionally biased region" description="Low complexity" evidence="2">
    <location>
        <begin position="125"/>
        <end position="154"/>
    </location>
</feature>
<feature type="compositionally biased region" description="Low complexity" evidence="2">
    <location>
        <begin position="199"/>
        <end position="220"/>
    </location>
</feature>
<feature type="compositionally biased region" description="Gly residues" evidence="2">
    <location>
        <begin position="254"/>
        <end position="263"/>
    </location>
</feature>
<feature type="compositionally biased region" description="Low complexity" evidence="2">
    <location>
        <begin position="264"/>
        <end position="274"/>
    </location>
</feature>
<feature type="compositionally biased region" description="Gly residues" evidence="2">
    <location>
        <begin position="281"/>
        <end position="303"/>
    </location>
</feature>
<feature type="compositionally biased region" description="Low complexity" evidence="2">
    <location>
        <begin position="316"/>
        <end position="332"/>
    </location>
</feature>
<feature type="compositionally biased region" description="Low complexity" evidence="2">
    <location>
        <begin position="367"/>
        <end position="386"/>
    </location>
</feature>
<feature type="compositionally biased region" description="Low complexity" evidence="2">
    <location>
        <begin position="408"/>
        <end position="421"/>
    </location>
</feature>
<feature type="compositionally biased region" description="Gly residues" evidence="2">
    <location>
        <begin position="422"/>
        <end position="431"/>
    </location>
</feature>
<feature type="compositionally biased region" description="Low complexity" evidence="2">
    <location>
        <begin position="459"/>
        <end position="476"/>
    </location>
</feature>
<feature type="compositionally biased region" description="Low complexity" evidence="2">
    <location>
        <begin position="488"/>
        <end position="498"/>
    </location>
</feature>
<feature type="compositionally biased region" description="Gly residues" evidence="2">
    <location>
        <begin position="499"/>
        <end position="517"/>
    </location>
</feature>
<feature type="compositionally biased region" description="Low complexity" evidence="2">
    <location>
        <begin position="527"/>
        <end position="574"/>
    </location>
</feature>
<feature type="compositionally biased region" description="Low complexity" evidence="2">
    <location>
        <begin position="581"/>
        <end position="601"/>
    </location>
</feature>
<feature type="compositionally biased region" description="Basic and acidic residues" evidence="2">
    <location>
        <begin position="602"/>
        <end position="611"/>
    </location>
</feature>
<feature type="compositionally biased region" description="Low complexity" evidence="2">
    <location>
        <begin position="619"/>
        <end position="629"/>
    </location>
</feature>
<feature type="compositionally biased region" description="Gly residues" evidence="2">
    <location>
        <begin position="639"/>
        <end position="648"/>
    </location>
</feature>
<feature type="compositionally biased region" description="Low complexity" evidence="2">
    <location>
        <begin position="650"/>
        <end position="659"/>
    </location>
</feature>
<feature type="compositionally biased region" description="Gly residues" evidence="2">
    <location>
        <begin position="696"/>
        <end position="705"/>
    </location>
</feature>
<feature type="compositionally biased region" description="Low complexity" evidence="2">
    <location>
        <begin position="713"/>
        <end position="740"/>
    </location>
</feature>
<feature type="compositionally biased region" description="Low complexity" evidence="2">
    <location>
        <begin position="748"/>
        <end position="758"/>
    </location>
</feature>
<feature type="compositionally biased region" description="Gly residues" evidence="2">
    <location>
        <begin position="759"/>
        <end position="776"/>
    </location>
</feature>
<feature type="compositionally biased region" description="Low complexity" evidence="2">
    <location>
        <begin position="782"/>
        <end position="797"/>
    </location>
</feature>
<feature type="compositionally biased region" description="Basic and acidic residues" evidence="2">
    <location>
        <begin position="807"/>
        <end position="818"/>
    </location>
</feature>
<feature type="compositionally biased region" description="Pro residues" evidence="2">
    <location>
        <begin position="883"/>
        <end position="895"/>
    </location>
</feature>
<feature type="modified residue" description="4-hydroxyproline" evidence="1">
    <location>
        <position position="10"/>
    </location>
</feature>
<feature type="modified residue" description="4-hydroxyproline" evidence="1">
    <location>
        <position position="13"/>
    </location>
</feature>
<feature type="modified residue" description="4-hydroxyproline" evidence="1">
    <location>
        <position position="35"/>
    </location>
</feature>
<feature type="modified residue" description="4-hydroxyproline" evidence="1">
    <location>
        <position position="41"/>
    </location>
</feature>
<feature type="modified residue" description="4-hydroxyproline" evidence="1">
    <location>
        <position position="338"/>
    </location>
</feature>
<feature type="modified residue" description="4-hydroxyproline" evidence="1">
    <location>
        <position position="341"/>
    </location>
</feature>
<feature type="unsure residue" description="L or I" evidence="4">
    <location>
        <position position="9"/>
    </location>
</feature>
<feature type="unsure residue" description="L or I" evidence="4">
    <location>
        <position position="21"/>
    </location>
</feature>
<feature type="unsure residue" description="L or I" evidence="4">
    <location>
        <position position="28"/>
    </location>
</feature>
<feature type="unsure residue" description="L or I" evidence="4">
    <location>
        <position position="102"/>
    </location>
</feature>
<feature type="unsure residue" description="I or L" evidence="4">
    <location>
        <position position="108"/>
    </location>
</feature>
<feature type="unsure residue" description="L or I" evidence="4">
    <location>
        <position position="118"/>
    </location>
</feature>
<feature type="unsure residue" description="I or L" evidence="4">
    <location>
        <position position="149"/>
    </location>
</feature>
<feature type="unsure residue" description="L or I" evidence="4">
    <location>
        <position position="167"/>
    </location>
</feature>
<feature type="unsure residue" description="L or I" evidence="4">
    <location>
        <position position="186"/>
    </location>
</feature>
<feature type="unsure residue" description="L or I" evidence="4">
    <location>
        <position position="204"/>
    </location>
</feature>
<feature type="unsure residue" description="L or I" evidence="4">
    <location>
        <position position="213"/>
    </location>
</feature>
<feature type="unsure residue" description="L or I" evidence="4">
    <location>
        <position position="222"/>
    </location>
</feature>
<feature type="unsure residue" description="I or L" evidence="4">
    <location>
        <position position="228"/>
    </location>
</feature>
<feature type="unsure residue" description="L or I" evidence="4">
    <location>
        <position position="243"/>
    </location>
</feature>
<feature type="unsure residue" description="L or I" evidence="4">
    <location>
        <position position="295"/>
    </location>
</feature>
<feature type="unsure residue" description="L or I" evidence="4">
    <location>
        <position position="304"/>
    </location>
</feature>
<feature type="unsure residue" description="I or L" evidence="4">
    <location>
        <position position="314"/>
    </location>
</feature>
<feature type="unsure residue" description="L or I" evidence="4">
    <location>
        <position position="343"/>
    </location>
</feature>
<feature type="unsure residue" description="L or I" evidence="4">
    <location>
        <position position="349"/>
    </location>
</feature>
<feature type="unsure residue" description="L or I" evidence="4">
    <location>
        <position position="367"/>
    </location>
</feature>
<feature type="unsure residue" description="I or L" evidence="4">
    <location>
        <position position="370"/>
    </location>
</feature>
<feature type="unsure residue" description="I or L" evidence="4">
    <location>
        <position position="377"/>
    </location>
</feature>
<feature type="unsure residue" description="I or L" evidence="4">
    <location>
        <position position="389"/>
    </location>
</feature>
<feature type="unsure residue" description="L or I" evidence="4">
    <location>
        <position position="420"/>
    </location>
</feature>
<feature type="unsure residue" description="L or I" evidence="4">
    <location>
        <position position="446"/>
    </location>
</feature>
<feature type="unsure residue" description="I or L" evidence="4">
    <location>
        <position position="471"/>
    </location>
</feature>
<feature type="unsure residue" description="I or L" evidence="4">
    <location>
        <position position="514"/>
    </location>
</feature>
<feature type="unsure residue" description="L or I" evidence="4">
    <location>
        <position position="526"/>
    </location>
</feature>
<feature type="unsure residue" description="I or L" evidence="4">
    <location>
        <position position="616"/>
    </location>
</feature>
<feature type="unsure residue" description="I or L" evidence="4">
    <location>
        <position position="667"/>
    </location>
</feature>
<feature type="unsure residue" description="L or I" evidence="4">
    <location>
        <position position="682"/>
    </location>
</feature>
<feature type="unsure residue" description="L or I" evidence="4">
    <location>
        <position position="730"/>
    </location>
</feature>
<feature type="unsure residue" description="L or I" evidence="4">
    <location>
        <position position="731"/>
    </location>
</feature>
<feature type="unsure residue" description="I or L" evidence="4">
    <location>
        <position position="736"/>
    </location>
</feature>
<feature type="unsure residue" description="L or I" evidence="4">
    <location>
        <position position="737"/>
    </location>
</feature>
<feature type="unsure residue" description="L or I" evidence="4">
    <location>
        <position position="739"/>
    </location>
</feature>
<feature type="unsure residue" description="L or I" evidence="4">
    <location>
        <position position="748"/>
    </location>
</feature>
<feature type="unsure residue" description="L or I" evidence="4">
    <location>
        <position position="761"/>
    </location>
</feature>
<feature type="unsure residue" description="I or L" evidence="4">
    <location>
        <position position="763"/>
    </location>
</feature>
<feature type="unsure residue" description="L or I" evidence="4">
    <location>
        <position position="795"/>
    </location>
</feature>
<feature type="unsure residue" description="I or L" evidence="4">
    <location>
        <position position="806"/>
    </location>
</feature>
<feature type="unsure residue" description="L or I" evidence="4">
    <location>
        <position position="821"/>
    </location>
</feature>
<feature type="unsure residue" description="L or I" evidence="4">
    <location>
        <position position="824"/>
    </location>
</feature>
<feature type="unsure residue" description="L or I" evidence="4">
    <location>
        <position position="826"/>
    </location>
</feature>
<feature type="unsure residue" description="L or I" evidence="4">
    <location>
        <position position="829"/>
    </location>
</feature>
<feature type="unsure residue" description="I or L" evidence="4">
    <location>
        <position position="873"/>
    </location>
</feature>
<feature type="non-consecutive residues" evidence="4">
    <location>
        <begin position="17"/>
        <end position="18"/>
    </location>
</feature>
<feature type="non-consecutive residues" evidence="4">
    <location>
        <begin position="75"/>
        <end position="76"/>
    </location>
</feature>
<feature type="non-consecutive residues" evidence="4">
    <location>
        <begin position="110"/>
        <end position="111"/>
    </location>
</feature>
<feature type="non-consecutive residues" evidence="4">
    <location>
        <begin position="175"/>
        <end position="176"/>
    </location>
</feature>
<feature type="non-consecutive residues" evidence="4">
    <location>
        <begin position="284"/>
        <end position="285"/>
    </location>
</feature>
<feature type="non-consecutive residues" evidence="4">
    <location>
        <begin position="403"/>
        <end position="404"/>
    </location>
</feature>
<feature type="non-consecutive residues" evidence="4">
    <location>
        <begin position="427"/>
        <end position="428"/>
    </location>
</feature>
<feature type="non-consecutive residues" evidence="4">
    <location>
        <begin position="440"/>
        <end position="441"/>
    </location>
</feature>
<feature type="non-consecutive residues" evidence="4">
    <location>
        <begin position="505"/>
        <end position="506"/>
    </location>
</feature>
<feature type="non-consecutive residues" evidence="4">
    <location>
        <begin position="763"/>
        <end position="764"/>
    </location>
</feature>
<feature type="non-consecutive residues" evidence="4">
    <location>
        <begin position="774"/>
        <end position="775"/>
    </location>
</feature>
<feature type="non-consecutive residues" evidence="4">
    <location>
        <begin position="824"/>
        <end position="825"/>
    </location>
</feature>
<feature type="non-consecutive residues" evidence="4">
    <location>
        <begin position="837"/>
        <end position="838"/>
    </location>
</feature>
<feature type="non-terminal residue" evidence="4">
    <location>
        <position position="1"/>
    </location>
</feature>
<feature type="non-terminal residue" evidence="4">
    <location>
        <position position="913"/>
    </location>
</feature>
<organism evidence="4">
    <name type="scientific">Parocnus serus</name>
    <name type="common">Greater Haitian ground sloth</name>
    <dbReference type="NCBI Taxonomy" id="2546659"/>
    <lineage>
        <taxon>Eukaryota</taxon>
        <taxon>Metazoa</taxon>
        <taxon>Chordata</taxon>
        <taxon>Craniata</taxon>
        <taxon>Vertebrata</taxon>
        <taxon>Euteleostomi</taxon>
        <taxon>Mammalia</taxon>
        <taxon>Eutheria</taxon>
        <taxon>Xenarthra</taxon>
        <taxon>Pilosa</taxon>
        <taxon>Folivora</taxon>
        <taxon>Megalonychidae</taxon>
        <taxon>Parocnus</taxon>
    </lineage>
</organism>
<accession>C0HLJ2</accession>
<reference evidence="5" key="1">
    <citation type="journal article" date="2019" name="Nat. Ecol. Evol.">
        <title>Palaeoproteomics resolves sloth relationships.</title>
        <authorList>
            <person name="Presslee S."/>
            <person name="Slater G.J."/>
            <person name="Pujos F."/>
            <person name="Forasiepi A.M."/>
            <person name="Fischer R."/>
            <person name="Molloy K."/>
            <person name="Mackie M."/>
            <person name="Olsen J.V."/>
            <person name="Kramarz A."/>
            <person name="Taglioretti M."/>
            <person name="Scaglia F."/>
            <person name="Lezcano M."/>
            <person name="Lanata J.L."/>
            <person name="Southon J."/>
            <person name="Feranec R."/>
            <person name="Bloch J."/>
            <person name="Hajduk A."/>
            <person name="Martin F.M."/>
            <person name="Salas Gismondi R."/>
            <person name="Reguero M."/>
            <person name="de Muizon C."/>
            <person name="Greenwood A."/>
            <person name="Chait B.T."/>
            <person name="Penkman K."/>
            <person name="Collins M."/>
            <person name="MacPhee R.D.E."/>
        </authorList>
    </citation>
    <scope>PROTEIN SEQUENCE</scope>
    <scope>TISSUE SPECIFICITY</scope>
    <scope>IDENTIFICATION BY MASS SPECTROMETRY</scope>
    <source>
        <tissue evidence="4">Bone</tissue>
    </source>
</reference>
<name>CO1A2_PARSU</name>
<evidence type="ECO:0000250" key="1">
    <source>
        <dbReference type="UniProtKB" id="P08123"/>
    </source>
</evidence>
<evidence type="ECO:0000256" key="2">
    <source>
        <dbReference type="SAM" id="MobiDB-lite"/>
    </source>
</evidence>
<evidence type="ECO:0000269" key="3">
    <source>
    </source>
</evidence>
<evidence type="ECO:0000303" key="4">
    <source>
    </source>
</evidence>
<evidence type="ECO:0000305" key="5"/>
<dbReference type="GO" id="GO:0031012">
    <property type="term" value="C:extracellular matrix"/>
    <property type="evidence" value="ECO:0007669"/>
    <property type="project" value="TreeGrafter"/>
</dbReference>
<dbReference type="GO" id="GO:0005615">
    <property type="term" value="C:extracellular space"/>
    <property type="evidence" value="ECO:0007669"/>
    <property type="project" value="TreeGrafter"/>
</dbReference>
<dbReference type="GO" id="GO:0030020">
    <property type="term" value="F:extracellular matrix structural constituent conferring tensile strength"/>
    <property type="evidence" value="ECO:0007669"/>
    <property type="project" value="TreeGrafter"/>
</dbReference>
<dbReference type="GO" id="GO:0030198">
    <property type="term" value="P:extracellular matrix organization"/>
    <property type="evidence" value="ECO:0007669"/>
    <property type="project" value="TreeGrafter"/>
</dbReference>
<dbReference type="InterPro" id="IPR008160">
    <property type="entry name" value="Collagen"/>
</dbReference>
<dbReference type="InterPro" id="IPR050149">
    <property type="entry name" value="Collagen_superfamily"/>
</dbReference>
<dbReference type="PANTHER" id="PTHR24023:SF1112">
    <property type="entry name" value="COL_CUTICLE_N DOMAIN-CONTAINING PROTEIN-RELATED"/>
    <property type="match status" value="1"/>
</dbReference>
<dbReference type="PANTHER" id="PTHR24023">
    <property type="entry name" value="COLLAGEN ALPHA"/>
    <property type="match status" value="1"/>
</dbReference>
<dbReference type="Pfam" id="PF01391">
    <property type="entry name" value="Collagen"/>
    <property type="match status" value="8"/>
</dbReference>
<keyword id="KW-0903">Direct protein sequencing</keyword>
<keyword id="KW-0952">Extinct organism protein</keyword>
<keyword id="KW-0272">Extracellular matrix</keyword>
<keyword id="KW-0379">Hydroxylation</keyword>
<keyword id="KW-0964">Secreted</keyword>